<gene>
    <name evidence="1" type="primary">rpoC</name>
    <name type="ordered locus">BQ2027_MB0687</name>
</gene>
<evidence type="ECO:0000255" key="1">
    <source>
        <dbReference type="HAMAP-Rule" id="MF_01322"/>
    </source>
</evidence>
<comment type="function">
    <text evidence="1">DNA-dependent RNA polymerase catalyzes the transcription of DNA into RNA using the four ribonucleoside triphosphates as substrates.</text>
</comment>
<comment type="catalytic activity">
    <reaction evidence="1">
        <text>RNA(n) + a ribonucleoside 5'-triphosphate = RNA(n+1) + diphosphate</text>
        <dbReference type="Rhea" id="RHEA:21248"/>
        <dbReference type="Rhea" id="RHEA-COMP:14527"/>
        <dbReference type="Rhea" id="RHEA-COMP:17342"/>
        <dbReference type="ChEBI" id="CHEBI:33019"/>
        <dbReference type="ChEBI" id="CHEBI:61557"/>
        <dbReference type="ChEBI" id="CHEBI:140395"/>
        <dbReference type="EC" id="2.7.7.6"/>
    </reaction>
</comment>
<comment type="cofactor">
    <cofactor evidence="1">
        <name>Mg(2+)</name>
        <dbReference type="ChEBI" id="CHEBI:18420"/>
    </cofactor>
    <text evidence="1">Binds 1 Mg(2+) ion per subunit.</text>
</comment>
<comment type="cofactor">
    <cofactor evidence="1">
        <name>Zn(2+)</name>
        <dbReference type="ChEBI" id="CHEBI:29105"/>
    </cofactor>
    <text evidence="1">Binds 2 Zn(2+) ions per subunit.</text>
</comment>
<comment type="subunit">
    <text evidence="1">The RNAP catalytic core consists of 2 alpha, 1 beta, 1 beta' and 1 omega subunit. When a sigma factor is associated with the core the holoenzyme is formed, which can initiate transcription.</text>
</comment>
<comment type="similarity">
    <text evidence="1">Belongs to the RNA polymerase beta' chain family.</text>
</comment>
<feature type="chain" id="PRO_0000067766" description="DNA-directed RNA polymerase subunit beta'">
    <location>
        <begin position="1"/>
        <end position="1316"/>
    </location>
</feature>
<feature type="binding site" evidence="1">
    <location>
        <position position="60"/>
    </location>
    <ligand>
        <name>Zn(2+)</name>
        <dbReference type="ChEBI" id="CHEBI:29105"/>
        <label>1</label>
    </ligand>
</feature>
<feature type="binding site" evidence="1">
    <location>
        <position position="62"/>
    </location>
    <ligand>
        <name>Zn(2+)</name>
        <dbReference type="ChEBI" id="CHEBI:29105"/>
        <label>1</label>
    </ligand>
</feature>
<feature type="binding site" evidence="1">
    <location>
        <position position="75"/>
    </location>
    <ligand>
        <name>Zn(2+)</name>
        <dbReference type="ChEBI" id="CHEBI:29105"/>
        <label>1</label>
    </ligand>
</feature>
<feature type="binding site" evidence="1">
    <location>
        <position position="78"/>
    </location>
    <ligand>
        <name>Zn(2+)</name>
        <dbReference type="ChEBI" id="CHEBI:29105"/>
        <label>1</label>
    </ligand>
</feature>
<feature type="binding site" evidence="1">
    <location>
        <position position="535"/>
    </location>
    <ligand>
        <name>Mg(2+)</name>
        <dbReference type="ChEBI" id="CHEBI:18420"/>
    </ligand>
</feature>
<feature type="binding site" evidence="1">
    <location>
        <position position="537"/>
    </location>
    <ligand>
        <name>Mg(2+)</name>
        <dbReference type="ChEBI" id="CHEBI:18420"/>
    </ligand>
</feature>
<feature type="binding site" evidence="1">
    <location>
        <position position="539"/>
    </location>
    <ligand>
        <name>Mg(2+)</name>
        <dbReference type="ChEBI" id="CHEBI:18420"/>
    </ligand>
</feature>
<feature type="binding site" evidence="1">
    <location>
        <position position="891"/>
    </location>
    <ligand>
        <name>Zn(2+)</name>
        <dbReference type="ChEBI" id="CHEBI:29105"/>
        <label>2</label>
    </ligand>
</feature>
<feature type="binding site" evidence="1">
    <location>
        <position position="968"/>
    </location>
    <ligand>
        <name>Zn(2+)</name>
        <dbReference type="ChEBI" id="CHEBI:29105"/>
        <label>2</label>
    </ligand>
</feature>
<feature type="binding site" evidence="1">
    <location>
        <position position="975"/>
    </location>
    <ligand>
        <name>Zn(2+)</name>
        <dbReference type="ChEBI" id="CHEBI:29105"/>
        <label>2</label>
    </ligand>
</feature>
<feature type="binding site" evidence="1">
    <location>
        <position position="978"/>
    </location>
    <ligand>
        <name>Zn(2+)</name>
        <dbReference type="ChEBI" id="CHEBI:29105"/>
        <label>2</label>
    </ligand>
</feature>
<protein>
    <recommendedName>
        <fullName evidence="1">DNA-directed RNA polymerase subunit beta'</fullName>
        <shortName evidence="1">RNAP subunit beta'</shortName>
        <ecNumber evidence="1">2.7.7.6</ecNumber>
    </recommendedName>
    <alternativeName>
        <fullName evidence="1">RNA polymerase subunit beta'</fullName>
    </alternativeName>
    <alternativeName>
        <fullName evidence="1">Transcriptase subunit beta'</fullName>
    </alternativeName>
</protein>
<name>RPOC_MYCBO</name>
<dbReference type="EC" id="2.7.7.6" evidence="1"/>
<dbReference type="EMBL" id="LT708304">
    <property type="protein sequence ID" value="SIT99285.1"/>
    <property type="molecule type" value="Genomic_DNA"/>
</dbReference>
<dbReference type="RefSeq" id="NP_854345.1">
    <property type="nucleotide sequence ID" value="NC_002945.3"/>
</dbReference>
<dbReference type="RefSeq" id="WP_003403413.1">
    <property type="nucleotide sequence ID" value="NC_002945.4"/>
</dbReference>
<dbReference type="SMR" id="P0A675"/>
<dbReference type="KEGG" id="mbo:BQ2027_MB0687"/>
<dbReference type="PATRIC" id="fig|233413.5.peg.747"/>
<dbReference type="Proteomes" id="UP000001419">
    <property type="component" value="Chromosome"/>
</dbReference>
<dbReference type="GO" id="GO:0000428">
    <property type="term" value="C:DNA-directed RNA polymerase complex"/>
    <property type="evidence" value="ECO:0007669"/>
    <property type="project" value="UniProtKB-KW"/>
</dbReference>
<dbReference type="GO" id="GO:0003677">
    <property type="term" value="F:DNA binding"/>
    <property type="evidence" value="ECO:0007669"/>
    <property type="project" value="UniProtKB-UniRule"/>
</dbReference>
<dbReference type="GO" id="GO:0003899">
    <property type="term" value="F:DNA-directed RNA polymerase activity"/>
    <property type="evidence" value="ECO:0007669"/>
    <property type="project" value="UniProtKB-UniRule"/>
</dbReference>
<dbReference type="GO" id="GO:0000287">
    <property type="term" value="F:magnesium ion binding"/>
    <property type="evidence" value="ECO:0007669"/>
    <property type="project" value="UniProtKB-UniRule"/>
</dbReference>
<dbReference type="GO" id="GO:0008270">
    <property type="term" value="F:zinc ion binding"/>
    <property type="evidence" value="ECO:0007669"/>
    <property type="project" value="UniProtKB-UniRule"/>
</dbReference>
<dbReference type="GO" id="GO:0006351">
    <property type="term" value="P:DNA-templated transcription"/>
    <property type="evidence" value="ECO:0007669"/>
    <property type="project" value="UniProtKB-UniRule"/>
</dbReference>
<dbReference type="CDD" id="cd02655">
    <property type="entry name" value="RNAP_beta'_C"/>
    <property type="match status" value="1"/>
</dbReference>
<dbReference type="CDD" id="cd01609">
    <property type="entry name" value="RNAP_beta'_N"/>
    <property type="match status" value="1"/>
</dbReference>
<dbReference type="FunFam" id="1.10.132.30:FF:000003">
    <property type="entry name" value="DNA-directed RNA polymerase subunit beta"/>
    <property type="match status" value="1"/>
</dbReference>
<dbReference type="FunFam" id="1.10.150.390:FF:000002">
    <property type="entry name" value="DNA-directed RNA polymerase subunit beta"/>
    <property type="match status" value="1"/>
</dbReference>
<dbReference type="FunFam" id="1.10.274.100:FF:000009">
    <property type="entry name" value="DNA-directed RNA polymerase subunit beta"/>
    <property type="match status" value="1"/>
</dbReference>
<dbReference type="FunFam" id="1.10.40.90:FF:000001">
    <property type="entry name" value="DNA-directed RNA polymerase subunit beta"/>
    <property type="match status" value="1"/>
</dbReference>
<dbReference type="FunFam" id="4.10.860.120:FF:000001">
    <property type="entry name" value="DNA-directed RNA polymerase subunit beta"/>
    <property type="match status" value="1"/>
</dbReference>
<dbReference type="Gene3D" id="1.10.132.30">
    <property type="match status" value="1"/>
</dbReference>
<dbReference type="Gene3D" id="1.10.150.390">
    <property type="match status" value="1"/>
</dbReference>
<dbReference type="Gene3D" id="1.10.1790.20">
    <property type="match status" value="1"/>
</dbReference>
<dbReference type="Gene3D" id="1.10.40.90">
    <property type="match status" value="1"/>
</dbReference>
<dbReference type="Gene3D" id="2.40.40.20">
    <property type="match status" value="1"/>
</dbReference>
<dbReference type="Gene3D" id="2.40.50.100">
    <property type="match status" value="1"/>
</dbReference>
<dbReference type="Gene3D" id="4.10.860.120">
    <property type="entry name" value="RNA polymerase II, clamp domain"/>
    <property type="match status" value="1"/>
</dbReference>
<dbReference type="Gene3D" id="1.10.274.100">
    <property type="entry name" value="RNA polymerase Rpb1, domain 3"/>
    <property type="match status" value="1"/>
</dbReference>
<dbReference type="HAMAP" id="MF_01322">
    <property type="entry name" value="RNApol_bact_RpoC"/>
    <property type="match status" value="1"/>
</dbReference>
<dbReference type="InterPro" id="IPR045867">
    <property type="entry name" value="DNA-dir_RpoC_beta_prime"/>
</dbReference>
<dbReference type="InterPro" id="IPR012754">
    <property type="entry name" value="DNA-dir_RpoC_beta_prime_bact"/>
</dbReference>
<dbReference type="InterPro" id="IPR000722">
    <property type="entry name" value="RNA_pol_asu"/>
</dbReference>
<dbReference type="InterPro" id="IPR006592">
    <property type="entry name" value="RNA_pol_N"/>
</dbReference>
<dbReference type="InterPro" id="IPR007080">
    <property type="entry name" value="RNA_pol_Rpb1_1"/>
</dbReference>
<dbReference type="InterPro" id="IPR007066">
    <property type="entry name" value="RNA_pol_Rpb1_3"/>
</dbReference>
<dbReference type="InterPro" id="IPR042102">
    <property type="entry name" value="RNA_pol_Rpb1_3_sf"/>
</dbReference>
<dbReference type="InterPro" id="IPR007083">
    <property type="entry name" value="RNA_pol_Rpb1_4"/>
</dbReference>
<dbReference type="InterPro" id="IPR007081">
    <property type="entry name" value="RNA_pol_Rpb1_5"/>
</dbReference>
<dbReference type="InterPro" id="IPR044893">
    <property type="entry name" value="RNA_pol_Rpb1_clamp_domain"/>
</dbReference>
<dbReference type="InterPro" id="IPR038120">
    <property type="entry name" value="Rpb1_funnel_sf"/>
</dbReference>
<dbReference type="NCBIfam" id="NF011498">
    <property type="entry name" value="PRK14906.1"/>
    <property type="match status" value="1"/>
</dbReference>
<dbReference type="NCBIfam" id="TIGR02386">
    <property type="entry name" value="rpoC_TIGR"/>
    <property type="match status" value="1"/>
</dbReference>
<dbReference type="PANTHER" id="PTHR19376">
    <property type="entry name" value="DNA-DIRECTED RNA POLYMERASE"/>
    <property type="match status" value="1"/>
</dbReference>
<dbReference type="PANTHER" id="PTHR19376:SF54">
    <property type="entry name" value="DNA-DIRECTED RNA POLYMERASE SUBUNIT BETA"/>
    <property type="match status" value="1"/>
</dbReference>
<dbReference type="Pfam" id="PF04997">
    <property type="entry name" value="RNA_pol_Rpb1_1"/>
    <property type="match status" value="1"/>
</dbReference>
<dbReference type="Pfam" id="PF00623">
    <property type="entry name" value="RNA_pol_Rpb1_2"/>
    <property type="match status" value="1"/>
</dbReference>
<dbReference type="Pfam" id="PF04983">
    <property type="entry name" value="RNA_pol_Rpb1_3"/>
    <property type="match status" value="1"/>
</dbReference>
<dbReference type="Pfam" id="PF05000">
    <property type="entry name" value="RNA_pol_Rpb1_4"/>
    <property type="match status" value="1"/>
</dbReference>
<dbReference type="Pfam" id="PF04998">
    <property type="entry name" value="RNA_pol_Rpb1_5"/>
    <property type="match status" value="1"/>
</dbReference>
<dbReference type="SMART" id="SM00663">
    <property type="entry name" value="RPOLA_N"/>
    <property type="match status" value="1"/>
</dbReference>
<dbReference type="SUPFAM" id="SSF64484">
    <property type="entry name" value="beta and beta-prime subunits of DNA dependent RNA-polymerase"/>
    <property type="match status" value="1"/>
</dbReference>
<organism>
    <name type="scientific">Mycobacterium bovis (strain ATCC BAA-935 / AF2122/97)</name>
    <dbReference type="NCBI Taxonomy" id="233413"/>
    <lineage>
        <taxon>Bacteria</taxon>
        <taxon>Bacillati</taxon>
        <taxon>Actinomycetota</taxon>
        <taxon>Actinomycetes</taxon>
        <taxon>Mycobacteriales</taxon>
        <taxon>Mycobacteriaceae</taxon>
        <taxon>Mycobacterium</taxon>
        <taxon>Mycobacterium tuberculosis complex</taxon>
    </lineage>
</organism>
<keyword id="KW-0240">DNA-directed RNA polymerase</keyword>
<keyword id="KW-0460">Magnesium</keyword>
<keyword id="KW-0479">Metal-binding</keyword>
<keyword id="KW-0548">Nucleotidyltransferase</keyword>
<keyword id="KW-1185">Reference proteome</keyword>
<keyword id="KW-0804">Transcription</keyword>
<keyword id="KW-0808">Transferase</keyword>
<keyword id="KW-0862">Zinc</keyword>
<accession>P0A675</accession>
<accession>A0A1R3XWG5</accession>
<accession>O06771</accession>
<accession>P47769</accession>
<accession>X2BFS1</accession>
<reference key="1">
    <citation type="journal article" date="2003" name="Proc. Natl. Acad. Sci. U.S.A.">
        <title>The complete genome sequence of Mycobacterium bovis.</title>
        <authorList>
            <person name="Garnier T."/>
            <person name="Eiglmeier K."/>
            <person name="Camus J.-C."/>
            <person name="Medina N."/>
            <person name="Mansoor H."/>
            <person name="Pryor M."/>
            <person name="Duthoy S."/>
            <person name="Grondin S."/>
            <person name="Lacroix C."/>
            <person name="Monsempe C."/>
            <person name="Simon S."/>
            <person name="Harris B."/>
            <person name="Atkin R."/>
            <person name="Doggett J."/>
            <person name="Mayes R."/>
            <person name="Keating L."/>
            <person name="Wheeler P.R."/>
            <person name="Parkhill J."/>
            <person name="Barrell B.G."/>
            <person name="Cole S.T."/>
            <person name="Gordon S.V."/>
            <person name="Hewinson R.G."/>
        </authorList>
    </citation>
    <scope>NUCLEOTIDE SEQUENCE [LARGE SCALE GENOMIC DNA]</scope>
    <source>
        <strain>ATCC BAA-935 / AF2122/97</strain>
    </source>
</reference>
<reference key="2">
    <citation type="journal article" date="2017" name="Genome Announc.">
        <title>Updated reference genome sequence and annotation of Mycobacterium bovis AF2122/97.</title>
        <authorList>
            <person name="Malone K.M."/>
            <person name="Farrell D."/>
            <person name="Stuber T.P."/>
            <person name="Schubert O.T."/>
            <person name="Aebersold R."/>
            <person name="Robbe-Austerman S."/>
            <person name="Gordon S.V."/>
        </authorList>
    </citation>
    <scope>NUCLEOTIDE SEQUENCE [LARGE SCALE GENOMIC DNA]</scope>
    <scope>GENOME REANNOTATION</scope>
    <source>
        <strain>ATCC BAA-935 / AF2122/97</strain>
    </source>
</reference>
<proteinExistence type="inferred from homology"/>
<sequence length="1316" mass="146769">MLDVNFFDELRIGLATAEDIRQWSYGEVKKPETINYRTLKPEKDGLFCEKIFGPTRDWECYCGKYKRVRFKGIICERCGVEVTRAKVRRERMGHIELAAPVTHIWYFKGVPSRLGYLLDLAPKDLEKIIYFAAYVITSVDEEMRHNELSTLEAEMAVERKAVEDQRDGELEARAQKLEADLAELEAEGAKADARRKVRDGGEREMRQIRDRAQRELDRLEDIWSTFTKLAPKQLIVDENLYRELVDRYGEYFTGAMGAESIQKLIENFDIDAEAESLRDVIRNGKGQKKLRALKRLKVVAAFQQSGNSPMGMVLDAVPVIPPELRPMVQLDGGRFATSDLNDLYRRVINRNNRLKRLIDLGAPEIIVNNEKRMLQESVDALFDNGRRGRPVTGPGNRPLKSLSDLLKGKQGRFRQNLLGKRVDYSGRSVIVVGPQLKLHQCGLPKLMALELFKPFVMKRLVDLNHAQNIKSAKRMVERQRPQVWDVLEEVIAEHPVLLNRAPTLHRLGIQAFEPMLVEGKAIQLHPLVCEAFNADFDGDQMAVHLPLSAEAQAEARILMLSSNNILSPASGRPLAMPRLDMVTGLYYLTTEVPGDTGEYQPASGDHPETGVYSSPAEAIMAADRGVLSVRAKIKVRLTQLRPPVEIEAELFGHSGWQPGDAWMAETTLGRVMFNELLPLGYPFVNKQMHKKVQAAIINDLAERYPMIVVAQTVDKLKDAGFYWATRSGVTVSMADVLVPPRKKEILDHYEERADKVEKQFQRGALNHDERNEALVEIWKEATDEVGQALREHYPDDNPIITIVDSGATGNFTQTRTLAGMKGLVTNPKGEFIPRPVKSSFREGLTVLEYFINTHGARKGLADTALRTADSGYLTRRLVDVSQDVIVREHDCQTERGIVVELAERAPDGTLIRDPYIETSAYARTLGTDAVDEAGNVIVERGQDLGDPEIDALLAAGITQVKVRSVLTCATSTGVCATCYGRSMATGKLVDIGEAVGIVAAQSIGEPGTQLTMRTFHQGGVGEDITGGLPRVQELFEARVPRGKAPIADVTGRVRLEDGERFYKITIVPDDGGEEVVYDKISKRQRLRVFKHEDGSERVLSDGDHVEVGQQLMEGSADPHEVLRVQGPREVQIHLVREVQEVYRAQGVSIHDKHIEVIVRQMLRRVTIIDSGSTEFLPGSLIDRAEFEAENRRVVAEGGEPAAGRPVLMGITKASLATDSWLSAASFQETTRVLTDAAINCRSDKLNGLKENVIIGKLIPAGTGINRYRNIAVQPTEEARAAAYTIPSYEDQYYSPDFGAATGAAVPLDDYGYSDYR</sequence>